<sequence length="336" mass="36671">MGHPLLLPLLLLLLHTGVPASWGLRCMQCNGHGNCRVEECALGQNLCRTTSVRHWEEGEEVEMVEKSCTHSEKTNRTMSFRTGVRITTLTEAVCGLDLCNQDSSGPAVTFPRSRFLECISCGSSDMSCERGRHQSLQCTSPKEQCLDMVTHRTSEAEEGRPKDDHHIRGCGHLPGCPGIAGFHSEDTFHFLKCCNTTKCNGGPILSLANLPKNGHRCYSCQGNSTHGCSSENTVLTDCRGPMNQCLEATGIYEPLSESYMVRGCATSSMCQHDHVSDAFSMSHIDVACCTENDCNNPAEDIQHRSEAAPQPGPAHLSLTITGLMTARLWGGTLLWT</sequence>
<gene>
    <name type="primary">PLAUR</name>
    <name type="synonym">UPAR</name>
</gene>
<dbReference type="EMBL" id="AF302074">
    <property type="protein sequence ID" value="AAG40762.1"/>
    <property type="molecule type" value="mRNA"/>
</dbReference>
<dbReference type="SMR" id="Q9GK77"/>
<dbReference type="GlyCosmos" id="Q9GK77">
    <property type="glycosylation" value="3 sites, No reported glycans"/>
</dbReference>
<dbReference type="GO" id="GO:0070161">
    <property type="term" value="C:anchoring junction"/>
    <property type="evidence" value="ECO:0007669"/>
    <property type="project" value="UniProtKB-KW"/>
</dbReference>
<dbReference type="GO" id="GO:0042995">
    <property type="term" value="C:cell projection"/>
    <property type="evidence" value="ECO:0007669"/>
    <property type="project" value="UniProtKB-SubCell"/>
</dbReference>
<dbReference type="GO" id="GO:0005886">
    <property type="term" value="C:plasma membrane"/>
    <property type="evidence" value="ECO:0007669"/>
    <property type="project" value="UniProtKB-SubCell"/>
</dbReference>
<dbReference type="GO" id="GO:0098552">
    <property type="term" value="C:side of membrane"/>
    <property type="evidence" value="ECO:0007669"/>
    <property type="project" value="UniProtKB-KW"/>
</dbReference>
<dbReference type="CDD" id="cd23556">
    <property type="entry name" value="TFP_LU_ECD_uPAR_rpt1"/>
    <property type="match status" value="1"/>
</dbReference>
<dbReference type="CDD" id="cd23557">
    <property type="entry name" value="TFP_LU_ECD_uPAR_rpt2"/>
    <property type="match status" value="1"/>
</dbReference>
<dbReference type="CDD" id="cd23558">
    <property type="entry name" value="TFP_LU_ECD_uPAR_rpt3"/>
    <property type="match status" value="1"/>
</dbReference>
<dbReference type="FunFam" id="2.10.60.10:FF:000013">
    <property type="entry name" value="Urokinase plasminogen activator surface receptor"/>
    <property type="match status" value="1"/>
</dbReference>
<dbReference type="FunFam" id="2.10.60.10:FF:000015">
    <property type="entry name" value="Urokinase plasminogen activator surface receptor"/>
    <property type="match status" value="1"/>
</dbReference>
<dbReference type="FunFam" id="2.10.60.10:FF:000019">
    <property type="entry name" value="Urokinase plasminogen activator surface receptor"/>
    <property type="match status" value="1"/>
</dbReference>
<dbReference type="Gene3D" id="2.10.60.10">
    <property type="entry name" value="CD59"/>
    <property type="match status" value="3"/>
</dbReference>
<dbReference type="InterPro" id="IPR018363">
    <property type="entry name" value="CD59_antigen_CS"/>
</dbReference>
<dbReference type="InterPro" id="IPR016054">
    <property type="entry name" value="LY6_UPA_recep-like"/>
</dbReference>
<dbReference type="InterPro" id="IPR045860">
    <property type="entry name" value="Snake_toxin-like_sf"/>
</dbReference>
<dbReference type="PANTHER" id="PTHR10624:SF6">
    <property type="entry name" value="UROKINASE PLASMINOGEN ACTIVATOR SURFACE RECEPTOR"/>
    <property type="match status" value="1"/>
</dbReference>
<dbReference type="PANTHER" id="PTHR10624">
    <property type="entry name" value="UROKINASE PLASMINOGEN ACTIVATOR SURFACE RECEPTOR-RELATED"/>
    <property type="match status" value="1"/>
</dbReference>
<dbReference type="Pfam" id="PF00021">
    <property type="entry name" value="UPAR_LY6"/>
    <property type="match status" value="3"/>
</dbReference>
<dbReference type="SMART" id="SM00134">
    <property type="entry name" value="LU"/>
    <property type="match status" value="3"/>
</dbReference>
<dbReference type="SUPFAM" id="SSF57302">
    <property type="entry name" value="Snake toxin-like"/>
    <property type="match status" value="3"/>
</dbReference>
<dbReference type="PROSITE" id="PS00983">
    <property type="entry name" value="LY6_UPAR"/>
    <property type="match status" value="3"/>
</dbReference>
<reference key="1">
    <citation type="submission" date="2000-09" db="EMBL/GenBank/DDBJ databases">
        <title>Characterization of the urokinase plasminogen activator receptor on primate cell lines.</title>
        <authorList>
            <person name="Engelholm L.H."/>
            <person name="Behrendt N."/>
        </authorList>
    </citation>
    <scope>NUCLEOTIDE SEQUENCE [MRNA]</scope>
    <source>
        <tissue>Kidney</tissue>
    </source>
</reference>
<comment type="function">
    <text evidence="1">Acts as a receptor for urokinase plasminogen activator. Plays a role in localizing and promoting plasmin formation. Mediates the proteolysis-independent signal transduction activation effects of U-PA. It is subject to negative-feedback regulation by U-PA which cleaves it into an inactive form (By similarity).</text>
</comment>
<comment type="subunit">
    <text evidence="3 5">Monomer (Probable). Interacts (via the UPAR/Ly6 domains) with SRPX2. Interacts with MRC2. Interacts with FAP (seprase); the interaction occurs at the cell surface of invadopodia membrane. Interacts with SORL1 (via N-terminal ectodomain); this interaction decreases PLAUR internalization (By similarity). The ternary complex composed of PLAUR-PLAU-SERPINE1 also interacts with SORL1 (By similarity).</text>
</comment>
<comment type="subcellular location">
    <subcellularLocation>
        <location evidence="3">Cell membrane</location>
    </subcellularLocation>
    <subcellularLocation>
        <location evidence="3">Cell projection</location>
        <location evidence="3">Invadopodium membrane</location>
    </subcellularLocation>
    <subcellularLocation>
        <location evidence="2">Cell membrane</location>
        <topology evidence="2">Lipid-anchor</topology>
        <topology evidence="2">GPI-anchor</topology>
    </subcellularLocation>
    <text evidence="3">Colocalized with FAP (seprase) preferentially at the cell surface of invadopodia membrane in a cytoskeleton-, integrin- and vitronectin-dependent manner.</text>
</comment>
<accession>Q9GK77</accession>
<evidence type="ECO:0000250" key="1"/>
<evidence type="ECO:0000250" key="2">
    <source>
        <dbReference type="UniProtKB" id="P49616"/>
    </source>
</evidence>
<evidence type="ECO:0000250" key="3">
    <source>
        <dbReference type="UniProtKB" id="Q03405"/>
    </source>
</evidence>
<evidence type="ECO:0000255" key="4"/>
<evidence type="ECO:0000305" key="5"/>
<keyword id="KW-0965">Cell junction</keyword>
<keyword id="KW-1003">Cell membrane</keyword>
<keyword id="KW-0966">Cell projection</keyword>
<keyword id="KW-1015">Disulfide bond</keyword>
<keyword id="KW-0325">Glycoprotein</keyword>
<keyword id="KW-0336">GPI-anchor</keyword>
<keyword id="KW-0449">Lipoprotein</keyword>
<keyword id="KW-0472">Membrane</keyword>
<keyword id="KW-0675">Receptor</keyword>
<keyword id="KW-0677">Repeat</keyword>
<keyword id="KW-0732">Signal</keyword>
<protein>
    <recommendedName>
        <fullName>Urokinase plasminogen activator surface receptor</fullName>
        <shortName>U-PAR</shortName>
        <shortName>uPAR</shortName>
    </recommendedName>
    <cdAntigenName>CD87</cdAntigenName>
</protein>
<organism>
    <name type="scientific">Aotus trivirgatus</name>
    <name type="common">Three-striped night monkey</name>
    <name type="synonym">Douroucouli</name>
    <dbReference type="NCBI Taxonomy" id="9505"/>
    <lineage>
        <taxon>Eukaryota</taxon>
        <taxon>Metazoa</taxon>
        <taxon>Chordata</taxon>
        <taxon>Craniata</taxon>
        <taxon>Vertebrata</taxon>
        <taxon>Euteleostomi</taxon>
        <taxon>Mammalia</taxon>
        <taxon>Eutheria</taxon>
        <taxon>Euarchontoglires</taxon>
        <taxon>Primates</taxon>
        <taxon>Haplorrhini</taxon>
        <taxon>Platyrrhini</taxon>
        <taxon>Aotidae</taxon>
        <taxon>Aotus</taxon>
    </lineage>
</organism>
<feature type="signal peptide" evidence="1">
    <location>
        <begin position="1"/>
        <end position="23"/>
    </location>
</feature>
<feature type="chain" id="PRO_0000318202" description="Urokinase plasminogen activator surface receptor">
    <location>
        <begin position="24"/>
        <end status="unknown"/>
    </location>
</feature>
<feature type="propeptide" id="PRO_0000318203" description="Removed in mature form" evidence="4">
    <location>
        <begin status="unknown"/>
        <end position="336"/>
    </location>
</feature>
<feature type="domain" description="UPAR/Ly6 1">
    <location>
        <begin position="24"/>
        <end position="111"/>
    </location>
</feature>
<feature type="domain" description="UPAR/Ly6 2">
    <location>
        <begin position="116"/>
        <end position="208"/>
    </location>
</feature>
<feature type="domain" description="UPAR/Ly6 3">
    <location>
        <begin position="215"/>
        <end position="302"/>
    </location>
</feature>
<feature type="site" description="Cleavage; by U-PA" evidence="1">
    <location>
        <begin position="112"/>
        <end position="113"/>
    </location>
</feature>
<feature type="glycosylation site" description="N-linked (GlcNAc...) asparagine" evidence="4">
    <location>
        <position position="75"/>
    </location>
</feature>
<feature type="glycosylation site" description="N-linked (GlcNAc...) asparagine" evidence="4">
    <location>
        <position position="195"/>
    </location>
</feature>
<feature type="glycosylation site" description="N-linked (GlcNAc...) asparagine" evidence="4">
    <location>
        <position position="223"/>
    </location>
</feature>
<feature type="disulfide bond" evidence="3">
    <location>
        <begin position="26"/>
        <end position="47"/>
    </location>
</feature>
<feature type="disulfide bond" evidence="3">
    <location>
        <begin position="29"/>
        <end position="35"/>
    </location>
</feature>
<feature type="disulfide bond" evidence="3">
    <location>
        <begin position="40"/>
        <end position="68"/>
    </location>
</feature>
<feature type="disulfide bond" evidence="3">
    <location>
        <begin position="94"/>
        <end position="99"/>
    </location>
</feature>
<feature type="disulfide bond" evidence="3">
    <location>
        <begin position="118"/>
        <end position="145"/>
    </location>
</feature>
<feature type="disulfide bond" evidence="3">
    <location>
        <begin position="121"/>
        <end position="128"/>
    </location>
</feature>
<feature type="disulfide bond" evidence="3">
    <location>
        <begin position="138"/>
        <end position="170"/>
    </location>
</feature>
<feature type="disulfide bond" evidence="3">
    <location>
        <begin position="176"/>
        <end position="193"/>
    </location>
</feature>
<feature type="disulfide bond" evidence="3">
    <location>
        <begin position="194"/>
        <end position="199"/>
    </location>
</feature>
<feature type="disulfide bond" evidence="3">
    <location>
        <begin position="217"/>
        <end position="245"/>
    </location>
</feature>
<feature type="disulfide bond" evidence="3">
    <location>
        <begin position="220"/>
        <end position="228"/>
    </location>
</feature>
<feature type="disulfide bond" evidence="3">
    <location>
        <begin position="238"/>
        <end position="264"/>
    </location>
</feature>
<feature type="disulfide bond" evidence="3">
    <location>
        <begin position="270"/>
        <end position="288"/>
    </location>
</feature>
<feature type="disulfide bond" evidence="3">
    <location>
        <begin position="289"/>
        <end position="294"/>
    </location>
</feature>
<name>UPAR_AOTTR</name>
<proteinExistence type="evidence at transcript level"/>